<protein>
    <recommendedName>
        <fullName evidence="1">Phosphoribosylformylglycinamidine cyclo-ligase</fullName>
        <ecNumber evidence="1">6.3.3.1</ecNumber>
    </recommendedName>
    <alternativeName>
        <fullName evidence="1">AIR synthase</fullName>
    </alternativeName>
    <alternativeName>
        <fullName evidence="1">AIRS</fullName>
    </alternativeName>
    <alternativeName>
        <fullName evidence="1">Phosphoribosyl-aminoimidazole synthetase</fullName>
    </alternativeName>
</protein>
<reference key="1">
    <citation type="journal article" date="2005" name="J. Bacteriol.">
        <title>Insights on evolution of virulence and resistance from the complete genome analysis of an early methicillin-resistant Staphylococcus aureus strain and a biofilm-producing methicillin-resistant Staphylococcus epidermidis strain.</title>
        <authorList>
            <person name="Gill S.R."/>
            <person name="Fouts D.E."/>
            <person name="Archer G.L."/>
            <person name="Mongodin E.F."/>
            <person name="DeBoy R.T."/>
            <person name="Ravel J."/>
            <person name="Paulsen I.T."/>
            <person name="Kolonay J.F."/>
            <person name="Brinkac L.M."/>
            <person name="Beanan M.J."/>
            <person name="Dodson R.J."/>
            <person name="Daugherty S.C."/>
            <person name="Madupu R."/>
            <person name="Angiuoli S.V."/>
            <person name="Durkin A.S."/>
            <person name="Haft D.H."/>
            <person name="Vamathevan J.J."/>
            <person name="Khouri H."/>
            <person name="Utterback T.R."/>
            <person name="Lee C."/>
            <person name="Dimitrov G."/>
            <person name="Jiang L."/>
            <person name="Qin H."/>
            <person name="Weidman J."/>
            <person name="Tran K."/>
            <person name="Kang K.H."/>
            <person name="Hance I.R."/>
            <person name="Nelson K.E."/>
            <person name="Fraser C.M."/>
        </authorList>
    </citation>
    <scope>NUCLEOTIDE SEQUENCE [LARGE SCALE GENOMIC DNA]</scope>
    <source>
        <strain>COL</strain>
    </source>
</reference>
<feature type="chain" id="PRO_0000148245" description="Phosphoribosylformylglycinamidine cyclo-ligase">
    <location>
        <begin position="1"/>
        <end position="342"/>
    </location>
</feature>
<evidence type="ECO:0000255" key="1">
    <source>
        <dbReference type="HAMAP-Rule" id="MF_00741"/>
    </source>
</evidence>
<organism>
    <name type="scientific">Staphylococcus aureus (strain COL)</name>
    <dbReference type="NCBI Taxonomy" id="93062"/>
    <lineage>
        <taxon>Bacteria</taxon>
        <taxon>Bacillati</taxon>
        <taxon>Bacillota</taxon>
        <taxon>Bacilli</taxon>
        <taxon>Bacillales</taxon>
        <taxon>Staphylococcaceae</taxon>
        <taxon>Staphylococcus</taxon>
    </lineage>
</organism>
<gene>
    <name evidence="1" type="primary">purM</name>
    <name type="ordered locus">SACOL1080</name>
</gene>
<keyword id="KW-0067">ATP-binding</keyword>
<keyword id="KW-0963">Cytoplasm</keyword>
<keyword id="KW-0436">Ligase</keyword>
<keyword id="KW-0547">Nucleotide-binding</keyword>
<keyword id="KW-0658">Purine biosynthesis</keyword>
<sequence>MSKAYEQSGVNIHAGYEAVERMSSHVKRTMRKEVIGGLGGFGATFDLSQLNMTAPVLVSGTDGVGTKLKLAIDYGKHDSIGIDAVAMCVNDILTTGAEPLYFLDYIATNKVVPEVIEQIVKGISDACVETNTALIGGETAEMGEMYHEGEYDVAGFAVGAVEKDDYVDGSEVKEGQVVIGLASSGIHSNGYSLVRKLINESGIDLASNFDNRPFIDVFLEPTKLYVKPVLALKKEVSIKAMNHITGGGFYENIPRALPAGYAARIDTTSFPTPKIFDWLQQQGNIDTNEMYNIFNMGIGYTVIVDEKDVSRALKILAEQNVEAYQIGHIVKNESTAIELLGV</sequence>
<name>PUR5_STAAC</name>
<proteinExistence type="inferred from homology"/>
<dbReference type="EC" id="6.3.3.1" evidence="1"/>
<dbReference type="EMBL" id="CP000046">
    <property type="protein sequence ID" value="AAW37960.1"/>
    <property type="molecule type" value="Genomic_DNA"/>
</dbReference>
<dbReference type="RefSeq" id="WP_000030812.1">
    <property type="nucleotide sequence ID" value="NZ_JBGOFO010000002.1"/>
</dbReference>
<dbReference type="SMR" id="Q5HH13"/>
<dbReference type="KEGG" id="sac:SACOL1080"/>
<dbReference type="HOGENOM" id="CLU_047116_0_0_9"/>
<dbReference type="UniPathway" id="UPA00074">
    <property type="reaction ID" value="UER00129"/>
</dbReference>
<dbReference type="Proteomes" id="UP000000530">
    <property type="component" value="Chromosome"/>
</dbReference>
<dbReference type="GO" id="GO:0005829">
    <property type="term" value="C:cytosol"/>
    <property type="evidence" value="ECO:0007669"/>
    <property type="project" value="TreeGrafter"/>
</dbReference>
<dbReference type="GO" id="GO:0005524">
    <property type="term" value="F:ATP binding"/>
    <property type="evidence" value="ECO:0007669"/>
    <property type="project" value="UniProtKB-KW"/>
</dbReference>
<dbReference type="GO" id="GO:0004637">
    <property type="term" value="F:phosphoribosylamine-glycine ligase activity"/>
    <property type="evidence" value="ECO:0007669"/>
    <property type="project" value="TreeGrafter"/>
</dbReference>
<dbReference type="GO" id="GO:0004641">
    <property type="term" value="F:phosphoribosylformylglycinamidine cyclo-ligase activity"/>
    <property type="evidence" value="ECO:0007669"/>
    <property type="project" value="UniProtKB-UniRule"/>
</dbReference>
<dbReference type="GO" id="GO:0006189">
    <property type="term" value="P:'de novo' IMP biosynthetic process"/>
    <property type="evidence" value="ECO:0007669"/>
    <property type="project" value="UniProtKB-UniRule"/>
</dbReference>
<dbReference type="GO" id="GO:0046084">
    <property type="term" value="P:adenine biosynthetic process"/>
    <property type="evidence" value="ECO:0007669"/>
    <property type="project" value="TreeGrafter"/>
</dbReference>
<dbReference type="CDD" id="cd02196">
    <property type="entry name" value="PurM"/>
    <property type="match status" value="1"/>
</dbReference>
<dbReference type="FunFam" id="3.30.1330.10:FF:000001">
    <property type="entry name" value="Phosphoribosylformylglycinamidine cyclo-ligase"/>
    <property type="match status" value="1"/>
</dbReference>
<dbReference type="FunFam" id="3.90.650.10:FF:000001">
    <property type="entry name" value="Phosphoribosylformylglycinamidine cyclo-ligase"/>
    <property type="match status" value="1"/>
</dbReference>
<dbReference type="Gene3D" id="3.90.650.10">
    <property type="entry name" value="PurM-like C-terminal domain"/>
    <property type="match status" value="1"/>
</dbReference>
<dbReference type="Gene3D" id="3.30.1330.10">
    <property type="entry name" value="PurM-like, N-terminal domain"/>
    <property type="match status" value="1"/>
</dbReference>
<dbReference type="HAMAP" id="MF_00741">
    <property type="entry name" value="AIRS"/>
    <property type="match status" value="1"/>
</dbReference>
<dbReference type="InterPro" id="IPR010918">
    <property type="entry name" value="PurM-like_C_dom"/>
</dbReference>
<dbReference type="InterPro" id="IPR036676">
    <property type="entry name" value="PurM-like_C_sf"/>
</dbReference>
<dbReference type="InterPro" id="IPR016188">
    <property type="entry name" value="PurM-like_N"/>
</dbReference>
<dbReference type="InterPro" id="IPR036921">
    <property type="entry name" value="PurM-like_N_sf"/>
</dbReference>
<dbReference type="InterPro" id="IPR004733">
    <property type="entry name" value="PurM_cligase"/>
</dbReference>
<dbReference type="NCBIfam" id="TIGR00878">
    <property type="entry name" value="purM"/>
    <property type="match status" value="1"/>
</dbReference>
<dbReference type="PANTHER" id="PTHR10520:SF12">
    <property type="entry name" value="TRIFUNCTIONAL PURINE BIOSYNTHETIC PROTEIN ADENOSINE-3"/>
    <property type="match status" value="1"/>
</dbReference>
<dbReference type="PANTHER" id="PTHR10520">
    <property type="entry name" value="TRIFUNCTIONAL PURINE BIOSYNTHETIC PROTEIN ADENOSINE-3-RELATED"/>
    <property type="match status" value="1"/>
</dbReference>
<dbReference type="Pfam" id="PF00586">
    <property type="entry name" value="AIRS"/>
    <property type="match status" value="1"/>
</dbReference>
<dbReference type="Pfam" id="PF02769">
    <property type="entry name" value="AIRS_C"/>
    <property type="match status" value="1"/>
</dbReference>
<dbReference type="SUPFAM" id="SSF56042">
    <property type="entry name" value="PurM C-terminal domain-like"/>
    <property type="match status" value="1"/>
</dbReference>
<dbReference type="SUPFAM" id="SSF55326">
    <property type="entry name" value="PurM N-terminal domain-like"/>
    <property type="match status" value="1"/>
</dbReference>
<comment type="catalytic activity">
    <reaction evidence="1">
        <text>2-formamido-N(1)-(5-O-phospho-beta-D-ribosyl)acetamidine + ATP = 5-amino-1-(5-phospho-beta-D-ribosyl)imidazole + ADP + phosphate + H(+)</text>
        <dbReference type="Rhea" id="RHEA:23032"/>
        <dbReference type="ChEBI" id="CHEBI:15378"/>
        <dbReference type="ChEBI" id="CHEBI:30616"/>
        <dbReference type="ChEBI" id="CHEBI:43474"/>
        <dbReference type="ChEBI" id="CHEBI:137981"/>
        <dbReference type="ChEBI" id="CHEBI:147287"/>
        <dbReference type="ChEBI" id="CHEBI:456216"/>
        <dbReference type="EC" id="6.3.3.1"/>
    </reaction>
</comment>
<comment type="pathway">
    <text evidence="1">Purine metabolism; IMP biosynthesis via de novo pathway; 5-amino-1-(5-phospho-D-ribosyl)imidazole from N(2)-formyl-N(1)-(5-phospho-D-ribosyl)glycinamide: step 2/2.</text>
</comment>
<comment type="subcellular location">
    <subcellularLocation>
        <location evidence="1">Cytoplasm</location>
    </subcellularLocation>
</comment>
<comment type="similarity">
    <text evidence="1">Belongs to the AIR synthase family.</text>
</comment>
<accession>Q5HH13</accession>